<reference key="1">
    <citation type="journal article" date="2004" name="Proc. Natl. Acad. Sci. U.S.A.">
        <title>Insights into the evolution of Yersinia pestis through whole-genome comparison with Yersinia pseudotuberculosis.</title>
        <authorList>
            <person name="Chain P.S.G."/>
            <person name="Carniel E."/>
            <person name="Larimer F.W."/>
            <person name="Lamerdin J."/>
            <person name="Stoutland P.O."/>
            <person name="Regala W.M."/>
            <person name="Georgescu A.M."/>
            <person name="Vergez L.M."/>
            <person name="Land M.L."/>
            <person name="Motin V.L."/>
            <person name="Brubaker R.R."/>
            <person name="Fowler J."/>
            <person name="Hinnebusch J."/>
            <person name="Marceau M."/>
            <person name="Medigue C."/>
            <person name="Simonet M."/>
            <person name="Chenal-Francisque V."/>
            <person name="Souza B."/>
            <person name="Dacheux D."/>
            <person name="Elliott J.M."/>
            <person name="Derbise A."/>
            <person name="Hauser L.J."/>
            <person name="Garcia E."/>
        </authorList>
    </citation>
    <scope>NUCLEOTIDE SEQUENCE [LARGE SCALE GENOMIC DNA]</scope>
    <source>
        <strain>IP32953</strain>
    </source>
</reference>
<keyword id="KW-0067">ATP-binding</keyword>
<keyword id="KW-0143">Chaperone</keyword>
<keyword id="KW-0963">Cytoplasm</keyword>
<keyword id="KW-0378">Hydrolase</keyword>
<keyword id="KW-0547">Nucleotide-binding</keyword>
<dbReference type="EC" id="3.6.1.-" evidence="1"/>
<dbReference type="EMBL" id="BX936398">
    <property type="protein sequence ID" value="CAH19245.1"/>
    <property type="molecule type" value="Genomic_DNA"/>
</dbReference>
<dbReference type="RefSeq" id="WP_011191439.1">
    <property type="nucleotide sequence ID" value="NC_006155.1"/>
</dbReference>
<dbReference type="SMR" id="Q66GH6"/>
<dbReference type="GeneID" id="49788032"/>
<dbReference type="KEGG" id="ypo:BZ17_2594"/>
<dbReference type="KEGG" id="yps:YPTB0005"/>
<dbReference type="PATRIC" id="fig|273123.14.peg.2720"/>
<dbReference type="Proteomes" id="UP000001011">
    <property type="component" value="Chromosome"/>
</dbReference>
<dbReference type="GO" id="GO:0005737">
    <property type="term" value="C:cytoplasm"/>
    <property type="evidence" value="ECO:0007669"/>
    <property type="project" value="UniProtKB-SubCell"/>
</dbReference>
<dbReference type="GO" id="GO:0005524">
    <property type="term" value="F:ATP binding"/>
    <property type="evidence" value="ECO:0007669"/>
    <property type="project" value="UniProtKB-KW"/>
</dbReference>
<dbReference type="GO" id="GO:0016887">
    <property type="term" value="F:ATP hydrolysis activity"/>
    <property type="evidence" value="ECO:0007669"/>
    <property type="project" value="UniProtKB-UniRule"/>
</dbReference>
<dbReference type="CDD" id="cd00009">
    <property type="entry name" value="AAA"/>
    <property type="match status" value="1"/>
</dbReference>
<dbReference type="Gene3D" id="1.20.58.1510">
    <property type="match status" value="1"/>
</dbReference>
<dbReference type="Gene3D" id="2.40.128.430">
    <property type="match status" value="1"/>
</dbReference>
<dbReference type="Gene3D" id="3.40.50.300">
    <property type="entry name" value="P-loop containing nucleotide triphosphate hydrolases"/>
    <property type="match status" value="1"/>
</dbReference>
<dbReference type="HAMAP" id="MF_01625">
    <property type="entry name" value="ATPase_RavA"/>
    <property type="match status" value="1"/>
</dbReference>
<dbReference type="InterPro" id="IPR003593">
    <property type="entry name" value="AAA+_ATPase"/>
</dbReference>
<dbReference type="InterPro" id="IPR023671">
    <property type="entry name" value="ATPase_RavA"/>
</dbReference>
<dbReference type="InterPro" id="IPR022547">
    <property type="entry name" value="ATPase_RavA_C"/>
</dbReference>
<dbReference type="InterPro" id="IPR045427">
    <property type="entry name" value="MoxR"/>
</dbReference>
<dbReference type="InterPro" id="IPR027417">
    <property type="entry name" value="P-loop_NTPase"/>
</dbReference>
<dbReference type="InterPro" id="IPR041538">
    <property type="entry name" value="RavA-like_AAA_lid"/>
</dbReference>
<dbReference type="InterPro" id="IPR050513">
    <property type="entry name" value="RavA_ATPases"/>
</dbReference>
<dbReference type="InterPro" id="IPR046898">
    <property type="entry name" value="RavA_LARA_dom"/>
</dbReference>
<dbReference type="InterPro" id="IPR046932">
    <property type="entry name" value="RavA_LARA_sf"/>
</dbReference>
<dbReference type="NCBIfam" id="NF010054">
    <property type="entry name" value="PRK13531.1"/>
    <property type="match status" value="1"/>
</dbReference>
<dbReference type="PANTHER" id="PTHR32204">
    <property type="entry name" value="ATPASE RAVA"/>
    <property type="match status" value="1"/>
</dbReference>
<dbReference type="PANTHER" id="PTHR32204:SF0">
    <property type="entry name" value="ATPASE RAVA"/>
    <property type="match status" value="1"/>
</dbReference>
<dbReference type="Pfam" id="PF17868">
    <property type="entry name" value="AAA_lid_8"/>
    <property type="match status" value="1"/>
</dbReference>
<dbReference type="Pfam" id="PF12592">
    <property type="entry name" value="ATPase_RavA_C"/>
    <property type="match status" value="1"/>
</dbReference>
<dbReference type="Pfam" id="PF20030">
    <property type="entry name" value="bpMoxR"/>
    <property type="match status" value="1"/>
</dbReference>
<dbReference type="Pfam" id="PF20265">
    <property type="entry name" value="LARA_dom"/>
    <property type="match status" value="1"/>
</dbReference>
<dbReference type="SMART" id="SM00382">
    <property type="entry name" value="AAA"/>
    <property type="match status" value="1"/>
</dbReference>
<dbReference type="SUPFAM" id="SSF52540">
    <property type="entry name" value="P-loop containing nucleoside triphosphate hydrolases"/>
    <property type="match status" value="1"/>
</dbReference>
<accession>Q66GH6</accession>
<comment type="function">
    <text evidence="1">Component of the RavA-ViaA chaperone complex, which may act on the membrane to optimize the function of some of the respiratory chains. RavA functions as an ATPase.</text>
</comment>
<comment type="catalytic activity">
    <reaction evidence="1">
        <text>ATP + H2O = ADP + phosphate + H(+)</text>
        <dbReference type="Rhea" id="RHEA:13065"/>
        <dbReference type="ChEBI" id="CHEBI:15377"/>
        <dbReference type="ChEBI" id="CHEBI:15378"/>
        <dbReference type="ChEBI" id="CHEBI:30616"/>
        <dbReference type="ChEBI" id="CHEBI:43474"/>
        <dbReference type="ChEBI" id="CHEBI:456216"/>
    </reaction>
</comment>
<comment type="activity regulation">
    <text evidence="1">ATPase activity is stimulated by ViaA.</text>
</comment>
<comment type="subunit">
    <text evidence="1">Homohexamer. Interacts with ViaA.</text>
</comment>
<comment type="subcellular location">
    <subcellularLocation>
        <location evidence="1">Cytoplasm</location>
    </subcellularLocation>
</comment>
<comment type="similarity">
    <text evidence="1">Belongs to the RavA family.</text>
</comment>
<sequence length="512" mass="58731">MAQSSQLAERISRLSHALESGLYERQEAIRLCLLAALSGESVFLLGPPGIAKSLIARRLKFAFRHARAFEYLMTRFSTPEEVFGPLSIQALKEEGRYQRMTGGYLPEAEIVFLDEIWKAGPAILNTLLTAINERRFRNGDREDSIPMRLLVTASNELPDADSSLEALYDRMLIRLWLDRVQEKQNFRSLLISRQNENHNPVAENLSITDEEFHQWQPLIDKITLPDHCFELIFQLRQRLSALEHAPYVSDRRWKKALRLLQASAFFSGRDEITPIDLILLKDCLWHDLNSFKLLQQQLEQLLTEQGYQQQSLLMKLQDINSKWLQHQQQQSDHQALTVVKQSGMFSRKAQYALPDNLTDSTLTLLLQKPLNLHDIQVNHLQVDKEALAQWLNKGGALRAKLNGVGYAQSIDAEIDDQLHIIILDVSRQPSTLSLPGATTTSVPPELLLALTKLESTLAEQRRLFSQHQPCLFTPSSWLAKIEASLLQVVEQLQFQQIQFQQRKFQQQKHSGH</sequence>
<feature type="chain" id="PRO_0000209383" description="Regulatory ATPase RavA">
    <location>
        <begin position="1"/>
        <end position="512"/>
    </location>
</feature>
<feature type="binding site" evidence="1">
    <location>
        <position position="23"/>
    </location>
    <ligand>
        <name>ADP</name>
        <dbReference type="ChEBI" id="CHEBI:456216"/>
    </ligand>
</feature>
<feature type="binding site" evidence="1">
    <location>
        <position position="49"/>
    </location>
    <ligand>
        <name>ADP</name>
        <dbReference type="ChEBI" id="CHEBI:456216"/>
    </ligand>
</feature>
<feature type="binding site" evidence="1">
    <location>
        <position position="50"/>
    </location>
    <ligand>
        <name>ADP</name>
        <dbReference type="ChEBI" id="CHEBI:456216"/>
    </ligand>
</feature>
<feature type="binding site" evidence="1">
    <location>
        <position position="51"/>
    </location>
    <ligand>
        <name>ADP</name>
        <dbReference type="ChEBI" id="CHEBI:456216"/>
    </ligand>
</feature>
<feature type="binding site" evidence="1">
    <location>
        <position position="52"/>
    </location>
    <ligand>
        <name>ADP</name>
        <dbReference type="ChEBI" id="CHEBI:456216"/>
    </ligand>
</feature>
<feature type="binding site" evidence="1">
    <location>
        <position position="53"/>
    </location>
    <ligand>
        <name>ADP</name>
        <dbReference type="ChEBI" id="CHEBI:456216"/>
    </ligand>
</feature>
<feature type="binding site" evidence="1">
    <location>
        <position position="54"/>
    </location>
    <ligand>
        <name>ADP</name>
        <dbReference type="ChEBI" id="CHEBI:456216"/>
    </ligand>
</feature>
<feature type="binding site" evidence="1">
    <location>
        <position position="196"/>
    </location>
    <ligand>
        <name>ADP</name>
        <dbReference type="ChEBI" id="CHEBI:456216"/>
    </ligand>
</feature>
<name>RAVA_YERPS</name>
<evidence type="ECO:0000255" key="1">
    <source>
        <dbReference type="HAMAP-Rule" id="MF_01625"/>
    </source>
</evidence>
<gene>
    <name evidence="1" type="primary">ravA</name>
    <name type="ordered locus">YPTB0005</name>
</gene>
<organism>
    <name type="scientific">Yersinia pseudotuberculosis serotype I (strain IP32953)</name>
    <dbReference type="NCBI Taxonomy" id="273123"/>
    <lineage>
        <taxon>Bacteria</taxon>
        <taxon>Pseudomonadati</taxon>
        <taxon>Pseudomonadota</taxon>
        <taxon>Gammaproteobacteria</taxon>
        <taxon>Enterobacterales</taxon>
        <taxon>Yersiniaceae</taxon>
        <taxon>Yersinia</taxon>
    </lineage>
</organism>
<proteinExistence type="inferred from homology"/>
<protein>
    <recommendedName>
        <fullName evidence="1">Regulatory ATPase RavA</fullName>
        <ecNumber evidence="1">3.6.1.-</ecNumber>
    </recommendedName>
    <alternativeName>
        <fullName evidence="1">Regulatory ATPase variant A</fullName>
    </alternativeName>
</protein>